<keyword id="KW-0997">Cell inner membrane</keyword>
<keyword id="KW-1003">Cell membrane</keyword>
<keyword id="KW-0350">Heme biosynthesis</keyword>
<keyword id="KW-0472">Membrane</keyword>
<keyword id="KW-1185">Reference proteome</keyword>
<keyword id="KW-0808">Transferase</keyword>
<keyword id="KW-0812">Transmembrane</keyword>
<keyword id="KW-1133">Transmembrane helix</keyword>
<accession>A8H9S9</accession>
<evidence type="ECO:0000255" key="1">
    <source>
        <dbReference type="HAMAP-Rule" id="MF_00154"/>
    </source>
</evidence>
<protein>
    <recommendedName>
        <fullName evidence="1">Protoheme IX farnesyltransferase</fullName>
        <ecNumber evidence="1">2.5.1.141</ecNumber>
    </recommendedName>
    <alternativeName>
        <fullName evidence="1">Heme B farnesyltransferase</fullName>
    </alternativeName>
    <alternativeName>
        <fullName evidence="1">Heme O synthase</fullName>
    </alternativeName>
</protein>
<proteinExistence type="inferred from homology"/>
<feature type="chain" id="PRO_0000346015" description="Protoheme IX farnesyltransferase">
    <location>
        <begin position="1"/>
        <end position="301"/>
    </location>
</feature>
<feature type="transmembrane region" description="Helical" evidence="1">
    <location>
        <begin position="29"/>
        <end position="49"/>
    </location>
</feature>
<feature type="transmembrane region" description="Helical" evidence="1">
    <location>
        <begin position="51"/>
        <end position="71"/>
    </location>
</feature>
<feature type="transmembrane region" description="Helical" evidence="1">
    <location>
        <begin position="96"/>
        <end position="116"/>
    </location>
</feature>
<feature type="transmembrane region" description="Helical" evidence="1">
    <location>
        <begin position="123"/>
        <end position="143"/>
    </location>
</feature>
<feature type="transmembrane region" description="Helical" evidence="1">
    <location>
        <begin position="151"/>
        <end position="171"/>
    </location>
</feature>
<feature type="transmembrane region" description="Helical" evidence="1">
    <location>
        <begin position="177"/>
        <end position="197"/>
    </location>
</feature>
<feature type="transmembrane region" description="Helical" evidence="1">
    <location>
        <begin position="223"/>
        <end position="243"/>
    </location>
</feature>
<feature type="transmembrane region" description="Helical" evidence="1">
    <location>
        <begin position="244"/>
        <end position="264"/>
    </location>
</feature>
<feature type="transmembrane region" description="Helical" evidence="1">
    <location>
        <begin position="281"/>
        <end position="301"/>
    </location>
</feature>
<organism>
    <name type="scientific">Shewanella pealeana (strain ATCC 700345 / ANG-SQ1)</name>
    <dbReference type="NCBI Taxonomy" id="398579"/>
    <lineage>
        <taxon>Bacteria</taxon>
        <taxon>Pseudomonadati</taxon>
        <taxon>Pseudomonadota</taxon>
        <taxon>Gammaproteobacteria</taxon>
        <taxon>Alteromonadales</taxon>
        <taxon>Shewanellaceae</taxon>
        <taxon>Shewanella</taxon>
    </lineage>
</organism>
<dbReference type="EC" id="2.5.1.141" evidence="1"/>
<dbReference type="EMBL" id="CP000851">
    <property type="protein sequence ID" value="ABV89316.1"/>
    <property type="molecule type" value="Genomic_DNA"/>
</dbReference>
<dbReference type="RefSeq" id="WP_012157196.1">
    <property type="nucleotide sequence ID" value="NC_009901.1"/>
</dbReference>
<dbReference type="SMR" id="A8H9S9"/>
<dbReference type="STRING" id="398579.Spea_4006"/>
<dbReference type="KEGG" id="spl:Spea_4006"/>
<dbReference type="eggNOG" id="COG0109">
    <property type="taxonomic scope" value="Bacteria"/>
</dbReference>
<dbReference type="HOGENOM" id="CLU_029631_0_2_6"/>
<dbReference type="OrthoDB" id="9814417at2"/>
<dbReference type="UniPathway" id="UPA00834">
    <property type="reaction ID" value="UER00712"/>
</dbReference>
<dbReference type="Proteomes" id="UP000002608">
    <property type="component" value="Chromosome"/>
</dbReference>
<dbReference type="GO" id="GO:0005886">
    <property type="term" value="C:plasma membrane"/>
    <property type="evidence" value="ECO:0007669"/>
    <property type="project" value="UniProtKB-SubCell"/>
</dbReference>
<dbReference type="GO" id="GO:0008495">
    <property type="term" value="F:protoheme IX farnesyltransferase activity"/>
    <property type="evidence" value="ECO:0007669"/>
    <property type="project" value="UniProtKB-UniRule"/>
</dbReference>
<dbReference type="GO" id="GO:0048034">
    <property type="term" value="P:heme O biosynthetic process"/>
    <property type="evidence" value="ECO:0007669"/>
    <property type="project" value="UniProtKB-UniRule"/>
</dbReference>
<dbReference type="CDD" id="cd13957">
    <property type="entry name" value="PT_UbiA_Cox10"/>
    <property type="match status" value="1"/>
</dbReference>
<dbReference type="FunFam" id="1.10.357.140:FF:000001">
    <property type="entry name" value="Protoheme IX farnesyltransferase"/>
    <property type="match status" value="1"/>
</dbReference>
<dbReference type="Gene3D" id="1.10.357.140">
    <property type="entry name" value="UbiA prenyltransferase"/>
    <property type="match status" value="1"/>
</dbReference>
<dbReference type="HAMAP" id="MF_00154">
    <property type="entry name" value="CyoE_CtaB"/>
    <property type="match status" value="1"/>
</dbReference>
<dbReference type="InterPro" id="IPR006369">
    <property type="entry name" value="Protohaem_IX_farnesylTrfase"/>
</dbReference>
<dbReference type="InterPro" id="IPR000537">
    <property type="entry name" value="UbiA_prenyltransferase"/>
</dbReference>
<dbReference type="InterPro" id="IPR030470">
    <property type="entry name" value="UbiA_prenylTrfase_CS"/>
</dbReference>
<dbReference type="InterPro" id="IPR044878">
    <property type="entry name" value="UbiA_sf"/>
</dbReference>
<dbReference type="NCBIfam" id="TIGR01473">
    <property type="entry name" value="cyoE_ctaB"/>
    <property type="match status" value="1"/>
</dbReference>
<dbReference type="NCBIfam" id="NF003349">
    <property type="entry name" value="PRK04375.1-2"/>
    <property type="match status" value="1"/>
</dbReference>
<dbReference type="PANTHER" id="PTHR43448:SF7">
    <property type="entry name" value="4-HYDROXYBENZOATE SOLANESYLTRANSFERASE"/>
    <property type="match status" value="1"/>
</dbReference>
<dbReference type="PANTHER" id="PTHR43448">
    <property type="entry name" value="PROTOHEME IX FARNESYLTRANSFERASE, MITOCHONDRIAL"/>
    <property type="match status" value="1"/>
</dbReference>
<dbReference type="Pfam" id="PF01040">
    <property type="entry name" value="UbiA"/>
    <property type="match status" value="1"/>
</dbReference>
<dbReference type="PROSITE" id="PS00943">
    <property type="entry name" value="UBIA"/>
    <property type="match status" value="1"/>
</dbReference>
<reference key="1">
    <citation type="submission" date="2007-10" db="EMBL/GenBank/DDBJ databases">
        <title>Complete sequence of Shewanella pealeana ATCC 700345.</title>
        <authorList>
            <consortium name="US DOE Joint Genome Institute"/>
            <person name="Copeland A."/>
            <person name="Lucas S."/>
            <person name="Lapidus A."/>
            <person name="Barry K."/>
            <person name="Glavina del Rio T."/>
            <person name="Dalin E."/>
            <person name="Tice H."/>
            <person name="Pitluck S."/>
            <person name="Chertkov O."/>
            <person name="Brettin T."/>
            <person name="Bruce D."/>
            <person name="Detter J.C."/>
            <person name="Han C."/>
            <person name="Schmutz J."/>
            <person name="Larimer F."/>
            <person name="Land M."/>
            <person name="Hauser L."/>
            <person name="Kyrpides N."/>
            <person name="Kim E."/>
            <person name="Zhao J.-S.Z."/>
            <person name="Manno D."/>
            <person name="Hawari J."/>
            <person name="Richardson P."/>
        </authorList>
    </citation>
    <scope>NUCLEOTIDE SEQUENCE [LARGE SCALE GENOMIC DNA]</scope>
    <source>
        <strain>ATCC 700345 / ANG-SQ1</strain>
    </source>
</reference>
<name>CYOE_SHEPA</name>
<gene>
    <name evidence="1" type="primary">cyoE</name>
    <name type="ordered locus">Spea_4006</name>
</gene>
<sequence length="301" mass="32994">MAKQIALPRSQTSPLFQWRAYYEMTKPKVVALMLLTVLVGMCLAVPGTVPLVPLIAGMAGIGMMAGSAAAFNHLIDRRIDGLMARTYNRPLPKGRISIIKAISFASILGTLGFIILYALVNPLTAWLTFASLIGYAVVYTAYLKRATPQNIVVGGLAGAMPPLLGWTAVTGEFHGNALLLVIIIFAWTPPHFWALAIHRKAEYAKVDIPMLPVTHGVEFTKTCIFLYTVLLAIACLLPVLVGMCGPVYLVSSTLLSAGFIYKAWQLKFHETPGLAMNVFKFSIYHLMLLFIALLVDHYLWV</sequence>
<comment type="function">
    <text evidence="1">Converts heme B (protoheme IX) to heme O by substitution of the vinyl group on carbon 2 of heme B porphyrin ring with a hydroxyethyl farnesyl side group.</text>
</comment>
<comment type="catalytic activity">
    <reaction evidence="1">
        <text>heme b + (2E,6E)-farnesyl diphosphate + H2O = Fe(II)-heme o + diphosphate</text>
        <dbReference type="Rhea" id="RHEA:28070"/>
        <dbReference type="ChEBI" id="CHEBI:15377"/>
        <dbReference type="ChEBI" id="CHEBI:33019"/>
        <dbReference type="ChEBI" id="CHEBI:60344"/>
        <dbReference type="ChEBI" id="CHEBI:60530"/>
        <dbReference type="ChEBI" id="CHEBI:175763"/>
        <dbReference type="EC" id="2.5.1.141"/>
    </reaction>
</comment>
<comment type="pathway">
    <text evidence="1">Porphyrin-containing compound metabolism; heme O biosynthesis; heme O from protoheme: step 1/1.</text>
</comment>
<comment type="subcellular location">
    <subcellularLocation>
        <location evidence="1">Cell inner membrane</location>
        <topology evidence="1">Multi-pass membrane protein</topology>
    </subcellularLocation>
</comment>
<comment type="miscellaneous">
    <text evidence="1">Carbon 2 of the heme B porphyrin ring is defined according to the Fischer nomenclature.</text>
</comment>
<comment type="similarity">
    <text evidence="1">Belongs to the UbiA prenyltransferase family. Protoheme IX farnesyltransferase subfamily.</text>
</comment>